<gene>
    <name evidence="1" type="primary">xylA</name>
    <name type="ordered locus">RSKD131_2573</name>
</gene>
<sequence>MTDFFAGIPQIRYEGEGSSNEFAFRHYNPDEVILGKRMEDHLRFAVAWWHSFAWPGGDPFGGQTFDRPWFGDTLDLAKLKADVAFEMFDILGAPFFCFHDADIRPEGATFAESKRNLEEIVDHIGTRMEGSKTKLLWGTANLFSHRRFMSGAATNPDPDVFAWSAATVKGCMDATMKLGGANYVLWGGREGYETLLNTDLTREAENAGRFLQMVVDYKHKIGFQGTILIEPKPQEPSKHQYDYDVATVYGFLKRFGLEKEVKLNIEQGHAILAGHSFEHELALAASLGILGSIDMNRNDYQSGWDTDQFPHNHPEMALAYYEILRAGGFTTGGTNFDAKIRRQSLDPEDLVLAHVGGMDTCARALKAAARLYEDGSLETARAARYAGWETPEAQAMLASSLEEIEARVLAEGINPKPRSGRQERLENLWNRFV</sequence>
<dbReference type="EC" id="5.3.1.5" evidence="1"/>
<dbReference type="EMBL" id="CP001150">
    <property type="protein sequence ID" value="ACM02433.1"/>
    <property type="molecule type" value="Genomic_DNA"/>
</dbReference>
<dbReference type="RefSeq" id="WP_015921510.1">
    <property type="nucleotide sequence ID" value="NC_011963.1"/>
</dbReference>
<dbReference type="SMR" id="B9KPP8"/>
<dbReference type="GeneID" id="67447950"/>
<dbReference type="KEGG" id="rsk:RSKD131_2573"/>
<dbReference type="HOGENOM" id="CLU_037261_1_0_5"/>
<dbReference type="GO" id="GO:0005737">
    <property type="term" value="C:cytoplasm"/>
    <property type="evidence" value="ECO:0007669"/>
    <property type="project" value="UniProtKB-SubCell"/>
</dbReference>
<dbReference type="GO" id="GO:0000287">
    <property type="term" value="F:magnesium ion binding"/>
    <property type="evidence" value="ECO:0007669"/>
    <property type="project" value="UniProtKB-UniRule"/>
</dbReference>
<dbReference type="GO" id="GO:0009045">
    <property type="term" value="F:xylose isomerase activity"/>
    <property type="evidence" value="ECO:0007669"/>
    <property type="project" value="UniProtKB-UniRule"/>
</dbReference>
<dbReference type="GO" id="GO:0042732">
    <property type="term" value="P:D-xylose metabolic process"/>
    <property type="evidence" value="ECO:0007669"/>
    <property type="project" value="UniProtKB-UniRule"/>
</dbReference>
<dbReference type="Gene3D" id="3.20.20.150">
    <property type="entry name" value="Divalent-metal-dependent TIM barrel enzymes"/>
    <property type="match status" value="1"/>
</dbReference>
<dbReference type="HAMAP" id="MF_00455">
    <property type="entry name" value="Xylose_isom_A"/>
    <property type="match status" value="1"/>
</dbReference>
<dbReference type="InterPro" id="IPR036237">
    <property type="entry name" value="Xyl_isomerase-like_sf"/>
</dbReference>
<dbReference type="InterPro" id="IPR013452">
    <property type="entry name" value="Xylose_isom_bac"/>
</dbReference>
<dbReference type="InterPro" id="IPR001998">
    <property type="entry name" value="Xylose_isomerase"/>
</dbReference>
<dbReference type="NCBIfam" id="NF003998">
    <property type="entry name" value="PRK05474.1"/>
    <property type="match status" value="1"/>
</dbReference>
<dbReference type="NCBIfam" id="TIGR02630">
    <property type="entry name" value="xylose_isom_A"/>
    <property type="match status" value="1"/>
</dbReference>
<dbReference type="PANTHER" id="PTHR48408">
    <property type="match status" value="1"/>
</dbReference>
<dbReference type="PANTHER" id="PTHR48408:SF1">
    <property type="entry name" value="XYLOSE ISOMERASE"/>
    <property type="match status" value="1"/>
</dbReference>
<dbReference type="PRINTS" id="PR00688">
    <property type="entry name" value="XYLOSISMRASE"/>
</dbReference>
<dbReference type="SUPFAM" id="SSF51658">
    <property type="entry name" value="Xylose isomerase-like"/>
    <property type="match status" value="1"/>
</dbReference>
<dbReference type="PROSITE" id="PS51415">
    <property type="entry name" value="XYLOSE_ISOMERASE"/>
    <property type="match status" value="1"/>
</dbReference>
<comment type="catalytic activity">
    <reaction evidence="1">
        <text>alpha-D-xylose = alpha-D-xylulofuranose</text>
        <dbReference type="Rhea" id="RHEA:22816"/>
        <dbReference type="ChEBI" id="CHEBI:28518"/>
        <dbReference type="ChEBI" id="CHEBI:188998"/>
        <dbReference type="EC" id="5.3.1.5"/>
    </reaction>
</comment>
<comment type="cofactor">
    <cofactor evidence="1">
        <name>Mg(2+)</name>
        <dbReference type="ChEBI" id="CHEBI:18420"/>
    </cofactor>
    <text evidence="1">Binds 2 magnesium ions per subunit.</text>
</comment>
<comment type="subunit">
    <text evidence="1">Homotetramer.</text>
</comment>
<comment type="subcellular location">
    <subcellularLocation>
        <location evidence="1">Cytoplasm</location>
    </subcellularLocation>
</comment>
<comment type="similarity">
    <text evidence="1">Belongs to the xylose isomerase family.</text>
</comment>
<reference key="1">
    <citation type="journal article" date="2009" name="J. Bacteriol.">
        <title>Complete genome sequence of Rhodobacter sphaeroides KD131.</title>
        <authorList>
            <person name="Lim S.-K."/>
            <person name="Kim S.J."/>
            <person name="Cha S.H."/>
            <person name="Oh Y.-K."/>
            <person name="Rhee H.-J."/>
            <person name="Kim M.-S."/>
            <person name="Lee J.K."/>
        </authorList>
    </citation>
    <scope>NUCLEOTIDE SEQUENCE [LARGE SCALE GENOMIC DNA]</scope>
    <source>
        <strain>KD131 / KCTC 12085</strain>
    </source>
</reference>
<evidence type="ECO:0000255" key="1">
    <source>
        <dbReference type="HAMAP-Rule" id="MF_00455"/>
    </source>
</evidence>
<protein>
    <recommendedName>
        <fullName evidence="1">Xylose isomerase</fullName>
        <ecNumber evidence="1">5.3.1.5</ecNumber>
    </recommendedName>
</protein>
<keyword id="KW-0119">Carbohydrate metabolism</keyword>
<keyword id="KW-0963">Cytoplasm</keyword>
<keyword id="KW-0413">Isomerase</keyword>
<keyword id="KW-0460">Magnesium</keyword>
<keyword id="KW-0479">Metal-binding</keyword>
<keyword id="KW-0859">Xylose metabolism</keyword>
<organism>
    <name type="scientific">Cereibacter sphaeroides (strain KD131 / KCTC 12085)</name>
    <name type="common">Rhodobacter sphaeroides</name>
    <dbReference type="NCBI Taxonomy" id="557760"/>
    <lineage>
        <taxon>Bacteria</taxon>
        <taxon>Pseudomonadati</taxon>
        <taxon>Pseudomonadota</taxon>
        <taxon>Alphaproteobacteria</taxon>
        <taxon>Rhodobacterales</taxon>
        <taxon>Paracoccaceae</taxon>
        <taxon>Cereibacter</taxon>
    </lineage>
</organism>
<proteinExistence type="inferred from homology"/>
<name>XYLA_CERSK</name>
<feature type="chain" id="PRO_1000200302" description="Xylose isomerase">
    <location>
        <begin position="1"/>
        <end position="433"/>
    </location>
</feature>
<feature type="binding site" evidence="1">
    <location>
        <position position="305"/>
    </location>
    <ligand>
        <name>Mg(2+)</name>
        <dbReference type="ChEBI" id="CHEBI:18420"/>
        <label>2</label>
    </ligand>
</feature>
<feature type="binding site" evidence="1">
    <location>
        <position position="307"/>
    </location>
    <ligand>
        <name>Mg(2+)</name>
        <dbReference type="ChEBI" id="CHEBI:18420"/>
        <label>2</label>
    </ligand>
</feature>
<accession>B9KPP8</accession>